<protein>
    <recommendedName>
        <fullName evidence="1">N-(5'-phosphoribosyl)anthranilate isomerase</fullName>
        <shortName evidence="1">PRAI</shortName>
        <ecNumber evidence="1">5.3.1.24</ecNumber>
    </recommendedName>
</protein>
<evidence type="ECO:0000255" key="1">
    <source>
        <dbReference type="HAMAP-Rule" id="MF_00135"/>
    </source>
</evidence>
<organism>
    <name type="scientific">Pseudomonas putida (strain W619)</name>
    <dbReference type="NCBI Taxonomy" id="390235"/>
    <lineage>
        <taxon>Bacteria</taxon>
        <taxon>Pseudomonadati</taxon>
        <taxon>Pseudomonadota</taxon>
        <taxon>Gammaproteobacteria</taxon>
        <taxon>Pseudomonadales</taxon>
        <taxon>Pseudomonadaceae</taxon>
        <taxon>Pseudomonas</taxon>
    </lineage>
</organism>
<keyword id="KW-0028">Amino-acid biosynthesis</keyword>
<keyword id="KW-0057">Aromatic amino acid biosynthesis</keyword>
<keyword id="KW-0413">Isomerase</keyword>
<keyword id="KW-0822">Tryptophan biosynthesis</keyword>
<gene>
    <name evidence="1" type="primary">trpF</name>
    <name type="ordered locus">PputW619_1556</name>
</gene>
<sequence>MSNVRSKICGITRIEDALAAAEAGADAIGFVFYAKSPRAVDVRQARAIMAELPPFVTTVGLFVNASRCELNEILEAVPLDLLQFHGDETPADCEGYHRPWIKALRVRPGDDLEAACRHYAGARGILLDTYVAGVPGGTGEAFDWSLVPSRLSKPIILAGGLSAGNVGQAIAQVRPYAVDVSGGVEQAKGIKDAAKIEAFMRAVKQA</sequence>
<feature type="chain" id="PRO_1000095932" description="N-(5'-phosphoribosyl)anthranilate isomerase">
    <location>
        <begin position="1"/>
        <end position="206"/>
    </location>
</feature>
<comment type="catalytic activity">
    <reaction evidence="1">
        <text>N-(5-phospho-beta-D-ribosyl)anthranilate = 1-(2-carboxyphenylamino)-1-deoxy-D-ribulose 5-phosphate</text>
        <dbReference type="Rhea" id="RHEA:21540"/>
        <dbReference type="ChEBI" id="CHEBI:18277"/>
        <dbReference type="ChEBI" id="CHEBI:58613"/>
        <dbReference type="EC" id="5.3.1.24"/>
    </reaction>
</comment>
<comment type="pathway">
    <text evidence="1">Amino-acid biosynthesis; L-tryptophan biosynthesis; L-tryptophan from chorismate: step 3/5.</text>
</comment>
<comment type="similarity">
    <text evidence="1">Belongs to the TrpF family.</text>
</comment>
<reference key="1">
    <citation type="submission" date="2008-02" db="EMBL/GenBank/DDBJ databases">
        <title>Complete sequence of Pseudomonas putida W619.</title>
        <authorList>
            <person name="Copeland A."/>
            <person name="Lucas S."/>
            <person name="Lapidus A."/>
            <person name="Barry K."/>
            <person name="Detter J.C."/>
            <person name="Glavina del Rio T."/>
            <person name="Dalin E."/>
            <person name="Tice H."/>
            <person name="Pitluck S."/>
            <person name="Chain P."/>
            <person name="Malfatti S."/>
            <person name="Shin M."/>
            <person name="Vergez L."/>
            <person name="Schmutz J."/>
            <person name="Larimer F."/>
            <person name="Land M."/>
            <person name="Hauser L."/>
            <person name="Kyrpides N."/>
            <person name="Kim E."/>
            <person name="Taghavi S."/>
            <person name="Vangronsveld D."/>
            <person name="van der Lelie D."/>
            <person name="Richardson P."/>
        </authorList>
    </citation>
    <scope>NUCLEOTIDE SEQUENCE [LARGE SCALE GENOMIC DNA]</scope>
    <source>
        <strain>W619</strain>
    </source>
</reference>
<accession>B1J538</accession>
<dbReference type="EC" id="5.3.1.24" evidence="1"/>
<dbReference type="EMBL" id="CP000949">
    <property type="protein sequence ID" value="ACA72061.1"/>
    <property type="molecule type" value="Genomic_DNA"/>
</dbReference>
<dbReference type="SMR" id="B1J538"/>
<dbReference type="STRING" id="390235.PputW619_1556"/>
<dbReference type="KEGG" id="ppw:PputW619_1556"/>
<dbReference type="eggNOG" id="COG0135">
    <property type="taxonomic scope" value="Bacteria"/>
</dbReference>
<dbReference type="HOGENOM" id="CLU_076364_2_0_6"/>
<dbReference type="OrthoDB" id="9796196at2"/>
<dbReference type="UniPathway" id="UPA00035">
    <property type="reaction ID" value="UER00042"/>
</dbReference>
<dbReference type="GO" id="GO:0004640">
    <property type="term" value="F:phosphoribosylanthranilate isomerase activity"/>
    <property type="evidence" value="ECO:0007669"/>
    <property type="project" value="UniProtKB-UniRule"/>
</dbReference>
<dbReference type="GO" id="GO:0000162">
    <property type="term" value="P:L-tryptophan biosynthetic process"/>
    <property type="evidence" value="ECO:0007669"/>
    <property type="project" value="UniProtKB-UniRule"/>
</dbReference>
<dbReference type="CDD" id="cd00405">
    <property type="entry name" value="PRAI"/>
    <property type="match status" value="1"/>
</dbReference>
<dbReference type="FunFam" id="3.20.20.70:FF:000075">
    <property type="entry name" value="Tryptophan biosynthesis protein TRP1"/>
    <property type="match status" value="1"/>
</dbReference>
<dbReference type="Gene3D" id="3.20.20.70">
    <property type="entry name" value="Aldolase class I"/>
    <property type="match status" value="1"/>
</dbReference>
<dbReference type="HAMAP" id="MF_00135">
    <property type="entry name" value="PRAI"/>
    <property type="match status" value="1"/>
</dbReference>
<dbReference type="InterPro" id="IPR013785">
    <property type="entry name" value="Aldolase_TIM"/>
</dbReference>
<dbReference type="InterPro" id="IPR001240">
    <property type="entry name" value="PRAI_dom"/>
</dbReference>
<dbReference type="InterPro" id="IPR011060">
    <property type="entry name" value="RibuloseP-bd_barrel"/>
</dbReference>
<dbReference type="InterPro" id="IPR044643">
    <property type="entry name" value="TrpF_fam"/>
</dbReference>
<dbReference type="NCBIfam" id="NF002298">
    <property type="entry name" value="PRK01222.1-4"/>
    <property type="match status" value="1"/>
</dbReference>
<dbReference type="NCBIfam" id="NF002299">
    <property type="entry name" value="PRK01222.1-6"/>
    <property type="match status" value="1"/>
</dbReference>
<dbReference type="PANTHER" id="PTHR42894">
    <property type="entry name" value="N-(5'-PHOSPHORIBOSYL)ANTHRANILATE ISOMERASE"/>
    <property type="match status" value="1"/>
</dbReference>
<dbReference type="PANTHER" id="PTHR42894:SF1">
    <property type="entry name" value="N-(5'-PHOSPHORIBOSYL)ANTHRANILATE ISOMERASE"/>
    <property type="match status" value="1"/>
</dbReference>
<dbReference type="Pfam" id="PF00697">
    <property type="entry name" value="PRAI"/>
    <property type="match status" value="1"/>
</dbReference>
<dbReference type="SUPFAM" id="SSF51366">
    <property type="entry name" value="Ribulose-phoshate binding barrel"/>
    <property type="match status" value="1"/>
</dbReference>
<proteinExistence type="inferred from homology"/>
<name>TRPF_PSEPW</name>